<evidence type="ECO:0000255" key="1">
    <source>
        <dbReference type="HAMAP-Rule" id="MF_00632"/>
    </source>
</evidence>
<name>Y1191_NITV4</name>
<accession>A1VCP5</accession>
<dbReference type="EMBL" id="CP000527">
    <property type="protein sequence ID" value="ABM28211.1"/>
    <property type="molecule type" value="Genomic_DNA"/>
</dbReference>
<dbReference type="RefSeq" id="WP_010939267.1">
    <property type="nucleotide sequence ID" value="NC_008751.1"/>
</dbReference>
<dbReference type="SMR" id="A1VCP5"/>
<dbReference type="KEGG" id="dvl:Dvul_1191"/>
<dbReference type="HOGENOM" id="CLU_099839_1_0_7"/>
<dbReference type="Proteomes" id="UP000009173">
    <property type="component" value="Chromosome"/>
</dbReference>
<dbReference type="GO" id="GO:0005829">
    <property type="term" value="C:cytosol"/>
    <property type="evidence" value="ECO:0007669"/>
    <property type="project" value="TreeGrafter"/>
</dbReference>
<dbReference type="GO" id="GO:0000166">
    <property type="term" value="F:nucleotide binding"/>
    <property type="evidence" value="ECO:0007669"/>
    <property type="project" value="TreeGrafter"/>
</dbReference>
<dbReference type="CDD" id="cd11740">
    <property type="entry name" value="YajQ_like"/>
    <property type="match status" value="1"/>
</dbReference>
<dbReference type="Gene3D" id="3.30.70.860">
    <property type="match status" value="1"/>
</dbReference>
<dbReference type="Gene3D" id="3.30.70.990">
    <property type="entry name" value="YajQ-like, domain 2"/>
    <property type="match status" value="1"/>
</dbReference>
<dbReference type="HAMAP" id="MF_00632">
    <property type="entry name" value="YajQ"/>
    <property type="match status" value="1"/>
</dbReference>
<dbReference type="InterPro" id="IPR007551">
    <property type="entry name" value="DUF520"/>
</dbReference>
<dbReference type="InterPro" id="IPR035571">
    <property type="entry name" value="UPF0234-like_C"/>
</dbReference>
<dbReference type="InterPro" id="IPR035570">
    <property type="entry name" value="UPF0234_N"/>
</dbReference>
<dbReference type="InterPro" id="IPR036183">
    <property type="entry name" value="YajQ-like_sf"/>
</dbReference>
<dbReference type="NCBIfam" id="NF003819">
    <property type="entry name" value="PRK05412.1"/>
    <property type="match status" value="1"/>
</dbReference>
<dbReference type="PANTHER" id="PTHR30476">
    <property type="entry name" value="UPF0234 PROTEIN YAJQ"/>
    <property type="match status" value="1"/>
</dbReference>
<dbReference type="PANTHER" id="PTHR30476:SF0">
    <property type="entry name" value="UPF0234 PROTEIN YAJQ"/>
    <property type="match status" value="1"/>
</dbReference>
<dbReference type="Pfam" id="PF04461">
    <property type="entry name" value="DUF520"/>
    <property type="match status" value="1"/>
</dbReference>
<dbReference type="SUPFAM" id="SSF89963">
    <property type="entry name" value="YajQ-like"/>
    <property type="match status" value="2"/>
</dbReference>
<keyword id="KW-0547">Nucleotide-binding</keyword>
<feature type="chain" id="PRO_1000051726" description="Nucleotide-binding protein Dvul_1191">
    <location>
        <begin position="1"/>
        <end position="163"/>
    </location>
</feature>
<reference key="1">
    <citation type="journal article" date="2009" name="Environ. Microbiol.">
        <title>Contribution of mobile genetic elements to Desulfovibrio vulgaris genome plasticity.</title>
        <authorList>
            <person name="Walker C.B."/>
            <person name="Stolyar S."/>
            <person name="Chivian D."/>
            <person name="Pinel N."/>
            <person name="Gabster J.A."/>
            <person name="Dehal P.S."/>
            <person name="He Z."/>
            <person name="Yang Z.K."/>
            <person name="Yen H.C."/>
            <person name="Zhou J."/>
            <person name="Wall J.D."/>
            <person name="Hazen T.C."/>
            <person name="Arkin A.P."/>
            <person name="Stahl D.A."/>
        </authorList>
    </citation>
    <scope>NUCLEOTIDE SEQUENCE [LARGE SCALE GENOMIC DNA]</scope>
    <source>
        <strain>DP4</strain>
    </source>
</reference>
<organism>
    <name type="scientific">Nitratidesulfovibrio vulgaris (strain DP4)</name>
    <name type="common">Desulfovibrio vulgaris</name>
    <dbReference type="NCBI Taxonomy" id="391774"/>
    <lineage>
        <taxon>Bacteria</taxon>
        <taxon>Pseudomonadati</taxon>
        <taxon>Thermodesulfobacteriota</taxon>
        <taxon>Desulfovibrionia</taxon>
        <taxon>Desulfovibrionales</taxon>
        <taxon>Desulfovibrionaceae</taxon>
        <taxon>Nitratidesulfovibrio</taxon>
    </lineage>
</organism>
<gene>
    <name type="ordered locus">Dvul_1191</name>
</gene>
<sequence length="163" mass="18614">MPSFDVVNKIELQELDNAVNNVKKEIETRYDFRNTTTEIDLHKGDLRITVVAADEMKMRALEEMLHAHCVRRKIDPRCLEFKEIEATSRGAVKREVQVKEGIAKDVAQKIVKAIKDSKLKVQGAIQDQQVRVTGKKIDDLQDVIALLREGDFGIPLQFVNMKN</sequence>
<protein>
    <recommendedName>
        <fullName evidence="1">Nucleotide-binding protein Dvul_1191</fullName>
    </recommendedName>
</protein>
<comment type="function">
    <text evidence="1">Nucleotide-binding protein.</text>
</comment>
<comment type="similarity">
    <text evidence="1">Belongs to the YajQ family.</text>
</comment>
<proteinExistence type="inferred from homology"/>